<keyword id="KW-0329">Glyoxylate bypass</keyword>
<keyword id="KW-0460">Magnesium</keyword>
<keyword id="KW-0464">Manganese</keyword>
<keyword id="KW-0479">Metal-binding</keyword>
<keyword id="KW-0521">NADP</keyword>
<keyword id="KW-0560">Oxidoreductase</keyword>
<keyword id="KW-0816">Tricarboxylic acid cycle</keyword>
<organism>
    <name type="scientific">Rickettsia bellii (strain RML369-C)</name>
    <dbReference type="NCBI Taxonomy" id="336407"/>
    <lineage>
        <taxon>Bacteria</taxon>
        <taxon>Pseudomonadati</taxon>
        <taxon>Pseudomonadota</taxon>
        <taxon>Alphaproteobacteria</taxon>
        <taxon>Rickettsiales</taxon>
        <taxon>Rickettsiaceae</taxon>
        <taxon>Rickettsieae</taxon>
        <taxon>Rickettsia</taxon>
        <taxon>belli group</taxon>
    </lineage>
</organism>
<gene>
    <name type="primary">icd</name>
    <name type="ordered locus">RBE_0289</name>
</gene>
<dbReference type="EC" id="1.1.1.42" evidence="1"/>
<dbReference type="EMBL" id="CP000087">
    <property type="protein sequence ID" value="ABE04370.1"/>
    <property type="molecule type" value="Genomic_DNA"/>
</dbReference>
<dbReference type="RefSeq" id="WP_011476981.1">
    <property type="nucleotide sequence ID" value="NC_007940.1"/>
</dbReference>
<dbReference type="SMR" id="Q1RJU4"/>
<dbReference type="KEGG" id="rbe:RBE_0289"/>
<dbReference type="eggNOG" id="COG0473">
    <property type="taxonomic scope" value="Bacteria"/>
</dbReference>
<dbReference type="HOGENOM" id="CLU_031953_1_2_5"/>
<dbReference type="OrthoDB" id="9767905at2"/>
<dbReference type="Proteomes" id="UP000001951">
    <property type="component" value="Chromosome"/>
</dbReference>
<dbReference type="GO" id="GO:0004449">
    <property type="term" value="F:isocitrate dehydrogenase (NAD+) activity"/>
    <property type="evidence" value="ECO:0007669"/>
    <property type="project" value="TreeGrafter"/>
</dbReference>
<dbReference type="GO" id="GO:0004450">
    <property type="term" value="F:isocitrate dehydrogenase (NADP+) activity"/>
    <property type="evidence" value="ECO:0007669"/>
    <property type="project" value="UniProtKB-EC"/>
</dbReference>
<dbReference type="GO" id="GO:0000287">
    <property type="term" value="F:magnesium ion binding"/>
    <property type="evidence" value="ECO:0007669"/>
    <property type="project" value="InterPro"/>
</dbReference>
<dbReference type="GO" id="GO:0051287">
    <property type="term" value="F:NAD binding"/>
    <property type="evidence" value="ECO:0007669"/>
    <property type="project" value="InterPro"/>
</dbReference>
<dbReference type="GO" id="GO:0006097">
    <property type="term" value="P:glyoxylate cycle"/>
    <property type="evidence" value="ECO:0007669"/>
    <property type="project" value="UniProtKB-KW"/>
</dbReference>
<dbReference type="GO" id="GO:0006102">
    <property type="term" value="P:isocitrate metabolic process"/>
    <property type="evidence" value="ECO:0007669"/>
    <property type="project" value="TreeGrafter"/>
</dbReference>
<dbReference type="GO" id="GO:0006099">
    <property type="term" value="P:tricarboxylic acid cycle"/>
    <property type="evidence" value="ECO:0007669"/>
    <property type="project" value="UniProtKB-KW"/>
</dbReference>
<dbReference type="FunFam" id="3.40.718.10:FF:000020">
    <property type="entry name" value="Isocitrate dehydrogenase"/>
    <property type="match status" value="1"/>
</dbReference>
<dbReference type="Gene3D" id="3.30.70.1570">
    <property type="match status" value="1"/>
</dbReference>
<dbReference type="Gene3D" id="3.40.718.10">
    <property type="entry name" value="Isopropylmalate Dehydrogenase"/>
    <property type="match status" value="1"/>
</dbReference>
<dbReference type="InterPro" id="IPR019818">
    <property type="entry name" value="IsoCit/isopropylmalate_DH_CS"/>
</dbReference>
<dbReference type="InterPro" id="IPR014273">
    <property type="entry name" value="Isocitrate_DH_bac-typ"/>
</dbReference>
<dbReference type="InterPro" id="IPR040978">
    <property type="entry name" value="Isocitrate_DH_TT1725_C"/>
</dbReference>
<dbReference type="InterPro" id="IPR046997">
    <property type="entry name" value="Isocitrate_DH_TT1725_C_sf"/>
</dbReference>
<dbReference type="InterPro" id="IPR024084">
    <property type="entry name" value="IsoPropMal-DH-like_dom"/>
</dbReference>
<dbReference type="NCBIfam" id="TIGR02924">
    <property type="entry name" value="ICDH_alpha"/>
    <property type="match status" value="1"/>
</dbReference>
<dbReference type="NCBIfam" id="NF006673">
    <property type="entry name" value="PRK09222.1"/>
    <property type="match status" value="1"/>
</dbReference>
<dbReference type="PANTHER" id="PTHR11835">
    <property type="entry name" value="DECARBOXYLATING DEHYDROGENASES-ISOCITRATE, ISOPROPYLMALATE, TARTRATE"/>
    <property type="match status" value="1"/>
</dbReference>
<dbReference type="PANTHER" id="PTHR11835:SF43">
    <property type="entry name" value="ISOPROPYLMALATE DEHYDROGENASE-LIKE DOMAIN-CONTAINING PROTEIN"/>
    <property type="match status" value="1"/>
</dbReference>
<dbReference type="Pfam" id="PF00180">
    <property type="entry name" value="Iso_dh"/>
    <property type="match status" value="1"/>
</dbReference>
<dbReference type="Pfam" id="PF18324">
    <property type="entry name" value="Isocitrate_DH_C_bact"/>
    <property type="match status" value="1"/>
</dbReference>
<dbReference type="SMART" id="SM01329">
    <property type="entry name" value="Iso_dh"/>
    <property type="match status" value="1"/>
</dbReference>
<dbReference type="SUPFAM" id="SSF53659">
    <property type="entry name" value="Isocitrate/Isopropylmalate dehydrogenase-like"/>
    <property type="match status" value="1"/>
</dbReference>
<dbReference type="PROSITE" id="PS00470">
    <property type="entry name" value="IDH_IMDH"/>
    <property type="match status" value="1"/>
</dbReference>
<accession>Q1RJU4</accession>
<sequence>MAEFTPITIAYGDGIGPEIMEAVLYILRKAEARIRLETIEVGEKLYVKHYSSGISEQSWESIERTGVILKAPITTPQGGGYKSLNVTIRKTLQLFANIRPSVSFYPFTKTLHPNLNLTIIRENEEDLYAGIEYRQTHNMYESVKLISRTGCEKIIRYAFEYAVKNNRKKVTCLSKDNIMKFSDGIFHKVFNEIAKEYPQINNEHYIIDIGTARLATKPEIFDVIVTSNLYGDIISDVAAEISGSVGLAGSANIGEHYAMFEAVHGSAPDIAGQDIANPSGLLNAAIMMLVHIGQGDIATLIENAWKKTIEDGMHTADIYNKDHSTKKVGTKEFAEEVVKRLGQKPEKLAKADYPLVTKKQESNTTYKINTKEVKKLVGTDIFVGMNVASAHDIADKVNKLDIGNFELKTISSKGLKLWPRDTRFETISDHWCCRFMAKDGVELKHLDITKLLETLSKANIDFIKVENLFEFDGAAGYSLAQGE</sequence>
<reference key="1">
    <citation type="journal article" date="2006" name="PLoS Genet.">
        <title>Genome sequence of Rickettsia bellii illuminates the role of amoebae in gene exchanges between intracellular pathogens.</title>
        <authorList>
            <person name="Ogata H."/>
            <person name="La Scola B."/>
            <person name="Audic S."/>
            <person name="Renesto P."/>
            <person name="Blanc G."/>
            <person name="Robert C."/>
            <person name="Fournier P.-E."/>
            <person name="Claverie J.-M."/>
            <person name="Raoult D."/>
        </authorList>
    </citation>
    <scope>NUCLEOTIDE SEQUENCE [LARGE SCALE GENOMIC DNA]</scope>
    <source>
        <strain>RML369-C</strain>
    </source>
</reference>
<feature type="chain" id="PRO_0000292202" description="Isocitrate dehydrogenase [NADP]">
    <location>
        <begin position="1"/>
        <end position="483"/>
    </location>
</feature>
<feature type="binding site" evidence="1">
    <location>
        <position position="74"/>
    </location>
    <ligand>
        <name>NADP(+)</name>
        <dbReference type="ChEBI" id="CHEBI:58349"/>
    </ligand>
</feature>
<feature type="binding site" evidence="1">
    <location>
        <position position="83"/>
    </location>
    <ligand>
        <name>D-threo-isocitrate</name>
        <dbReference type="ChEBI" id="CHEBI:15562"/>
    </ligand>
</feature>
<feature type="binding site" evidence="1">
    <location>
        <position position="85"/>
    </location>
    <ligand>
        <name>D-threo-isocitrate</name>
        <dbReference type="ChEBI" id="CHEBI:15562"/>
    </ligand>
</feature>
<feature type="binding site" evidence="1">
    <location>
        <position position="89"/>
    </location>
    <ligand>
        <name>D-threo-isocitrate</name>
        <dbReference type="ChEBI" id="CHEBI:15562"/>
    </ligand>
</feature>
<feature type="binding site" evidence="1">
    <location>
        <position position="99"/>
    </location>
    <ligand>
        <name>D-threo-isocitrate</name>
        <dbReference type="ChEBI" id="CHEBI:15562"/>
    </ligand>
</feature>
<feature type="binding site" evidence="1">
    <location>
        <position position="121"/>
    </location>
    <ligand>
        <name>D-threo-isocitrate</name>
        <dbReference type="ChEBI" id="CHEBI:15562"/>
    </ligand>
</feature>
<feature type="binding site" evidence="1">
    <location>
        <position position="232"/>
    </location>
    <ligand>
        <name>Mg(2+)</name>
        <dbReference type="ChEBI" id="CHEBI:18420"/>
    </ligand>
</feature>
<feature type="binding site" evidence="1">
    <location>
        <begin position="264"/>
        <end position="270"/>
    </location>
    <ligand>
        <name>NADP(+)</name>
        <dbReference type="ChEBI" id="CHEBI:58349"/>
    </ligand>
</feature>
<feature type="binding site" evidence="1">
    <location>
        <position position="277"/>
    </location>
    <ligand>
        <name>NADP(+)</name>
        <dbReference type="ChEBI" id="CHEBI:58349"/>
    </ligand>
</feature>
<feature type="site" description="Critical for catalysis" evidence="1">
    <location>
        <position position="128"/>
    </location>
</feature>
<feature type="site" description="Critical for catalysis" evidence="1">
    <location>
        <position position="175"/>
    </location>
</feature>
<name>IDH_RICBR</name>
<evidence type="ECO:0000250" key="1">
    <source>
        <dbReference type="UniProtKB" id="P08200"/>
    </source>
</evidence>
<evidence type="ECO:0000305" key="2"/>
<protein>
    <recommendedName>
        <fullName>Isocitrate dehydrogenase [NADP]</fullName>
        <shortName>IDH</shortName>
        <ecNumber evidence="1">1.1.1.42</ecNumber>
    </recommendedName>
    <alternativeName>
        <fullName>IDP</fullName>
    </alternativeName>
    <alternativeName>
        <fullName>NADP(+)-specific ICDH</fullName>
    </alternativeName>
    <alternativeName>
        <fullName>Oxalosuccinate decarboxylase</fullName>
    </alternativeName>
</protein>
<comment type="function">
    <text evidence="1">Catalyzes the oxidative decarboxylation of isocitrate to 2-oxoglutarate and carbon dioxide with the concomitant reduction of NADP(+).</text>
</comment>
<comment type="catalytic activity">
    <reaction evidence="1">
        <text>D-threo-isocitrate + NADP(+) = 2-oxoglutarate + CO2 + NADPH</text>
        <dbReference type="Rhea" id="RHEA:19629"/>
        <dbReference type="ChEBI" id="CHEBI:15562"/>
        <dbReference type="ChEBI" id="CHEBI:16526"/>
        <dbReference type="ChEBI" id="CHEBI:16810"/>
        <dbReference type="ChEBI" id="CHEBI:57783"/>
        <dbReference type="ChEBI" id="CHEBI:58349"/>
        <dbReference type="EC" id="1.1.1.42"/>
    </reaction>
</comment>
<comment type="cofactor">
    <cofactor evidence="1">
        <name>Mg(2+)</name>
        <dbReference type="ChEBI" id="CHEBI:18420"/>
    </cofactor>
    <cofactor evidence="1">
        <name>Mn(2+)</name>
        <dbReference type="ChEBI" id="CHEBI:29035"/>
    </cofactor>
    <text evidence="1">Binds 1 Mg(2+) or Mn(2+) ion per subunit.</text>
</comment>
<comment type="subunit">
    <text evidence="1">Homodimer.</text>
</comment>
<comment type="similarity">
    <text evidence="2">Belongs to the isocitrate and isopropylmalate dehydrogenases family.</text>
</comment>
<proteinExistence type="inferred from homology"/>